<sequence>MSSIDPPAGHTRPIVFFDISIGDTPAGRIKMELFDDITPKTAENFRQLCTGEHRINSVPQGYKKATFHRVIPQFMVQGGDFVRGDGTGSFSIYGAQFEDENFKVKHTGPGLLSMANSGPNTNGCQFFITTAPAEFLDGKHCVFGRVIDGLLTVRKIENVPTGANNRPKLQVRIAECGEM</sequence>
<evidence type="ECO:0000250" key="1"/>
<evidence type="ECO:0000255" key="2">
    <source>
        <dbReference type="PROSITE-ProRule" id="PRU00156"/>
    </source>
</evidence>
<evidence type="ECO:0000305" key="3"/>
<dbReference type="EC" id="5.2.1.8"/>
<dbReference type="EMBL" id="AE017350">
    <property type="protein sequence ID" value="AAW46023.1"/>
    <property type="molecule type" value="Genomic_DNA"/>
</dbReference>
<dbReference type="RefSeq" id="XP_567540.1">
    <property type="nucleotide sequence ID" value="XM_567540.1"/>
</dbReference>
<dbReference type="SMR" id="P0CP82"/>
<dbReference type="FunCoup" id="P0CP82">
    <property type="interactions" value="803"/>
</dbReference>
<dbReference type="STRING" id="214684.P0CP82"/>
<dbReference type="PaxDb" id="214684-P0CP82"/>
<dbReference type="EnsemblFungi" id="AAW46023">
    <property type="protein sequence ID" value="AAW46023"/>
    <property type="gene ID" value="CNJ02490"/>
</dbReference>
<dbReference type="GeneID" id="3254213"/>
<dbReference type="KEGG" id="cne:CNJ02490"/>
<dbReference type="VEuPathDB" id="FungiDB:CNJ02490"/>
<dbReference type="eggNOG" id="KOG0879">
    <property type="taxonomic scope" value="Eukaryota"/>
</dbReference>
<dbReference type="HOGENOM" id="CLU_012062_4_3_1"/>
<dbReference type="InParanoid" id="P0CP82"/>
<dbReference type="OMA" id="SVWGQVI"/>
<dbReference type="OrthoDB" id="193499at2759"/>
<dbReference type="Proteomes" id="UP000002149">
    <property type="component" value="Chromosome 10"/>
</dbReference>
<dbReference type="GO" id="GO:0005737">
    <property type="term" value="C:cytoplasm"/>
    <property type="evidence" value="ECO:0000318"/>
    <property type="project" value="GO_Central"/>
</dbReference>
<dbReference type="GO" id="GO:0043231">
    <property type="term" value="C:intracellular membrane-bounded organelle"/>
    <property type="evidence" value="ECO:0000318"/>
    <property type="project" value="GO_Central"/>
</dbReference>
<dbReference type="GO" id="GO:0005634">
    <property type="term" value="C:nucleus"/>
    <property type="evidence" value="ECO:0007669"/>
    <property type="project" value="UniProtKB-SubCell"/>
</dbReference>
<dbReference type="GO" id="GO:0016018">
    <property type="term" value="F:cyclosporin A binding"/>
    <property type="evidence" value="ECO:0000318"/>
    <property type="project" value="GO_Central"/>
</dbReference>
<dbReference type="GO" id="GO:0003755">
    <property type="term" value="F:peptidyl-prolyl cis-trans isomerase activity"/>
    <property type="evidence" value="ECO:0000318"/>
    <property type="project" value="GO_Central"/>
</dbReference>
<dbReference type="GO" id="GO:0006457">
    <property type="term" value="P:protein folding"/>
    <property type="evidence" value="ECO:0000318"/>
    <property type="project" value="GO_Central"/>
</dbReference>
<dbReference type="CDD" id="cd01926">
    <property type="entry name" value="cyclophilin_ABH_like"/>
    <property type="match status" value="1"/>
</dbReference>
<dbReference type="FunFam" id="2.40.100.10:FF:000039">
    <property type="entry name" value="Peptidyl-prolyl cis-trans isomerase"/>
    <property type="match status" value="1"/>
</dbReference>
<dbReference type="Gene3D" id="2.40.100.10">
    <property type="entry name" value="Cyclophilin-like"/>
    <property type="match status" value="1"/>
</dbReference>
<dbReference type="InterPro" id="IPR029000">
    <property type="entry name" value="Cyclophilin-like_dom_sf"/>
</dbReference>
<dbReference type="InterPro" id="IPR024936">
    <property type="entry name" value="Cyclophilin-type_PPIase"/>
</dbReference>
<dbReference type="InterPro" id="IPR020892">
    <property type="entry name" value="Cyclophilin-type_PPIase_CS"/>
</dbReference>
<dbReference type="InterPro" id="IPR002130">
    <property type="entry name" value="Cyclophilin-type_PPIase_dom"/>
</dbReference>
<dbReference type="PANTHER" id="PTHR11071">
    <property type="entry name" value="PEPTIDYL-PROLYL CIS-TRANS ISOMERASE"/>
    <property type="match status" value="1"/>
</dbReference>
<dbReference type="PANTHER" id="PTHR11071:SF561">
    <property type="entry name" value="PEPTIDYL-PROLYL CIS-TRANS ISOMERASE D-RELATED"/>
    <property type="match status" value="1"/>
</dbReference>
<dbReference type="Pfam" id="PF00160">
    <property type="entry name" value="Pro_isomerase"/>
    <property type="match status" value="1"/>
</dbReference>
<dbReference type="PIRSF" id="PIRSF001467">
    <property type="entry name" value="Peptidylpro_ismrse"/>
    <property type="match status" value="1"/>
</dbReference>
<dbReference type="PRINTS" id="PR00153">
    <property type="entry name" value="CSAPPISMRASE"/>
</dbReference>
<dbReference type="SUPFAM" id="SSF50891">
    <property type="entry name" value="Cyclophilin-like"/>
    <property type="match status" value="1"/>
</dbReference>
<dbReference type="PROSITE" id="PS00170">
    <property type="entry name" value="CSA_PPIASE_1"/>
    <property type="match status" value="1"/>
</dbReference>
<dbReference type="PROSITE" id="PS50072">
    <property type="entry name" value="CSA_PPIASE_2"/>
    <property type="match status" value="1"/>
</dbReference>
<reference key="1">
    <citation type="journal article" date="2005" name="Science">
        <title>The genome of the basidiomycetous yeast and human pathogen Cryptococcus neoformans.</title>
        <authorList>
            <person name="Loftus B.J."/>
            <person name="Fung E."/>
            <person name="Roncaglia P."/>
            <person name="Rowley D."/>
            <person name="Amedeo P."/>
            <person name="Bruno D."/>
            <person name="Vamathevan J."/>
            <person name="Miranda M."/>
            <person name="Anderson I.J."/>
            <person name="Fraser J.A."/>
            <person name="Allen J.E."/>
            <person name="Bosdet I.E."/>
            <person name="Brent M.R."/>
            <person name="Chiu R."/>
            <person name="Doering T.L."/>
            <person name="Donlin M.J."/>
            <person name="D'Souza C.A."/>
            <person name="Fox D.S."/>
            <person name="Grinberg V."/>
            <person name="Fu J."/>
            <person name="Fukushima M."/>
            <person name="Haas B.J."/>
            <person name="Huang J.C."/>
            <person name="Janbon G."/>
            <person name="Jones S.J.M."/>
            <person name="Koo H.L."/>
            <person name="Krzywinski M.I."/>
            <person name="Kwon-Chung K.J."/>
            <person name="Lengeler K.B."/>
            <person name="Maiti R."/>
            <person name="Marra M.A."/>
            <person name="Marra R.E."/>
            <person name="Mathewson C.A."/>
            <person name="Mitchell T.G."/>
            <person name="Pertea M."/>
            <person name="Riggs F.R."/>
            <person name="Salzberg S.L."/>
            <person name="Schein J.E."/>
            <person name="Shvartsbeyn A."/>
            <person name="Shin H."/>
            <person name="Shumway M."/>
            <person name="Specht C.A."/>
            <person name="Suh B.B."/>
            <person name="Tenney A."/>
            <person name="Utterback T.R."/>
            <person name="Wickes B.L."/>
            <person name="Wortman J.R."/>
            <person name="Wye N.H."/>
            <person name="Kronstad J.W."/>
            <person name="Lodge J.K."/>
            <person name="Heitman J."/>
            <person name="Davis R.W."/>
            <person name="Fraser C.M."/>
            <person name="Hyman R.W."/>
        </authorList>
    </citation>
    <scope>NUCLEOTIDE SEQUENCE [LARGE SCALE GENOMIC DNA]</scope>
    <source>
        <strain>JEC21 / ATCC MYA-565</strain>
    </source>
</reference>
<keyword id="KW-0413">Isomerase</keyword>
<keyword id="KW-0539">Nucleus</keyword>
<keyword id="KW-1185">Reference proteome</keyword>
<keyword id="KW-0697">Rotamase</keyword>
<gene>
    <name type="primary">CYP3</name>
    <name type="ordered locus">CNJ02490</name>
</gene>
<comment type="function">
    <text evidence="1">PPIases accelerate the folding of proteins. It catalyzes the cis-trans isomerization of proline imidic peptide bonds in oligopeptides (By similarity).</text>
</comment>
<comment type="catalytic activity">
    <reaction>
        <text>[protein]-peptidylproline (omega=180) = [protein]-peptidylproline (omega=0)</text>
        <dbReference type="Rhea" id="RHEA:16237"/>
        <dbReference type="Rhea" id="RHEA-COMP:10747"/>
        <dbReference type="Rhea" id="RHEA-COMP:10748"/>
        <dbReference type="ChEBI" id="CHEBI:83833"/>
        <dbReference type="ChEBI" id="CHEBI:83834"/>
        <dbReference type="EC" id="5.2.1.8"/>
    </reaction>
</comment>
<comment type="subcellular location">
    <subcellularLocation>
        <location evidence="1">Nucleus</location>
    </subcellularLocation>
</comment>
<comment type="similarity">
    <text evidence="3">Belongs to the cyclophilin-type PPIase family. PPIase H subfamily.</text>
</comment>
<protein>
    <recommendedName>
        <fullName>Peptidyl-prolyl cis-trans isomerase H</fullName>
        <shortName>PPIase H</shortName>
        <ecNumber>5.2.1.8</ecNumber>
    </recommendedName>
    <alternativeName>
        <fullName>Rotamase H</fullName>
    </alternativeName>
</protein>
<name>PPIH_CRYNJ</name>
<proteinExistence type="inferred from homology"/>
<feature type="chain" id="PRO_0000232955" description="Peptidyl-prolyl cis-trans isomerase H">
    <location>
        <begin position="1"/>
        <end position="179"/>
    </location>
</feature>
<feature type="domain" description="PPIase cyclophilin-type" evidence="2">
    <location>
        <begin position="16"/>
        <end position="178"/>
    </location>
</feature>
<organism>
    <name type="scientific">Cryptococcus neoformans var. neoformans serotype D (strain JEC21 / ATCC MYA-565)</name>
    <name type="common">Filobasidiella neoformans</name>
    <dbReference type="NCBI Taxonomy" id="214684"/>
    <lineage>
        <taxon>Eukaryota</taxon>
        <taxon>Fungi</taxon>
        <taxon>Dikarya</taxon>
        <taxon>Basidiomycota</taxon>
        <taxon>Agaricomycotina</taxon>
        <taxon>Tremellomycetes</taxon>
        <taxon>Tremellales</taxon>
        <taxon>Cryptococcaceae</taxon>
        <taxon>Cryptococcus</taxon>
        <taxon>Cryptococcus neoformans species complex</taxon>
    </lineage>
</organism>
<accession>P0CP82</accession>
<accession>Q55L87</accession>
<accession>Q5KA96</accession>